<comment type="function">
    <text evidence="1">Catalyzes the formation of S-adenosylmethionine (AdoMet) from methionine and ATP. The overall synthetic reaction is composed of two sequential steps, AdoMet formation and the subsequent tripolyphosphate hydrolysis which occurs prior to release of AdoMet from the enzyme.</text>
</comment>
<comment type="catalytic activity">
    <reaction evidence="1">
        <text>L-methionine + ATP + H2O = S-adenosyl-L-methionine + phosphate + diphosphate</text>
        <dbReference type="Rhea" id="RHEA:21080"/>
        <dbReference type="ChEBI" id="CHEBI:15377"/>
        <dbReference type="ChEBI" id="CHEBI:30616"/>
        <dbReference type="ChEBI" id="CHEBI:33019"/>
        <dbReference type="ChEBI" id="CHEBI:43474"/>
        <dbReference type="ChEBI" id="CHEBI:57844"/>
        <dbReference type="ChEBI" id="CHEBI:59789"/>
        <dbReference type="EC" id="2.5.1.6"/>
    </reaction>
</comment>
<comment type="cofactor">
    <cofactor evidence="1">
        <name>Mg(2+)</name>
        <dbReference type="ChEBI" id="CHEBI:18420"/>
    </cofactor>
    <text evidence="1">Binds 2 divalent ions per subunit.</text>
</comment>
<comment type="cofactor">
    <cofactor evidence="1">
        <name>K(+)</name>
        <dbReference type="ChEBI" id="CHEBI:29103"/>
    </cofactor>
    <text evidence="1">Binds 1 potassium ion per subunit.</text>
</comment>
<comment type="pathway">
    <text evidence="1">Amino-acid biosynthesis; S-adenosyl-L-methionine biosynthesis; S-adenosyl-L-methionine from L-methionine: step 1/1.</text>
</comment>
<comment type="subunit">
    <text evidence="1">Homotetramer; dimer of dimers.</text>
</comment>
<comment type="subcellular location">
    <subcellularLocation>
        <location evidence="1">Cytoplasm</location>
    </subcellularLocation>
</comment>
<comment type="similarity">
    <text evidence="1">Belongs to the AdoMet synthase family.</text>
</comment>
<reference key="1">
    <citation type="submission" date="2007-09" db="EMBL/GenBank/DDBJ databases">
        <title>Complete sequence of chromosome of Serratia proteamaculans 568.</title>
        <authorList>
            <consortium name="US DOE Joint Genome Institute"/>
            <person name="Copeland A."/>
            <person name="Lucas S."/>
            <person name="Lapidus A."/>
            <person name="Barry K."/>
            <person name="Glavina del Rio T."/>
            <person name="Dalin E."/>
            <person name="Tice H."/>
            <person name="Pitluck S."/>
            <person name="Chain P."/>
            <person name="Malfatti S."/>
            <person name="Shin M."/>
            <person name="Vergez L."/>
            <person name="Schmutz J."/>
            <person name="Larimer F."/>
            <person name="Land M."/>
            <person name="Hauser L."/>
            <person name="Kyrpides N."/>
            <person name="Kim E."/>
            <person name="Taghavi S."/>
            <person name="Newman L."/>
            <person name="Vangronsveld J."/>
            <person name="van der Lelie D."/>
            <person name="Richardson P."/>
        </authorList>
    </citation>
    <scope>NUCLEOTIDE SEQUENCE [LARGE SCALE GENOMIC DNA]</scope>
    <source>
        <strain>568</strain>
    </source>
</reference>
<dbReference type="EC" id="2.5.1.6" evidence="1"/>
<dbReference type="EMBL" id="CP000826">
    <property type="protein sequence ID" value="ABV43069.1"/>
    <property type="molecule type" value="Genomic_DNA"/>
</dbReference>
<dbReference type="SMR" id="A8GIX9"/>
<dbReference type="STRING" id="399741.Spro_3974"/>
<dbReference type="KEGG" id="spe:Spro_3974"/>
<dbReference type="eggNOG" id="COG0192">
    <property type="taxonomic scope" value="Bacteria"/>
</dbReference>
<dbReference type="HOGENOM" id="CLU_041802_1_1_6"/>
<dbReference type="OrthoDB" id="9801686at2"/>
<dbReference type="UniPathway" id="UPA00315">
    <property type="reaction ID" value="UER00080"/>
</dbReference>
<dbReference type="GO" id="GO:0005737">
    <property type="term" value="C:cytoplasm"/>
    <property type="evidence" value="ECO:0007669"/>
    <property type="project" value="UniProtKB-SubCell"/>
</dbReference>
<dbReference type="GO" id="GO:0005524">
    <property type="term" value="F:ATP binding"/>
    <property type="evidence" value="ECO:0007669"/>
    <property type="project" value="UniProtKB-UniRule"/>
</dbReference>
<dbReference type="GO" id="GO:0000287">
    <property type="term" value="F:magnesium ion binding"/>
    <property type="evidence" value="ECO:0007669"/>
    <property type="project" value="UniProtKB-UniRule"/>
</dbReference>
<dbReference type="GO" id="GO:0004478">
    <property type="term" value="F:methionine adenosyltransferase activity"/>
    <property type="evidence" value="ECO:0007669"/>
    <property type="project" value="UniProtKB-UniRule"/>
</dbReference>
<dbReference type="GO" id="GO:0006730">
    <property type="term" value="P:one-carbon metabolic process"/>
    <property type="evidence" value="ECO:0007669"/>
    <property type="project" value="UniProtKB-KW"/>
</dbReference>
<dbReference type="GO" id="GO:0006556">
    <property type="term" value="P:S-adenosylmethionine biosynthetic process"/>
    <property type="evidence" value="ECO:0007669"/>
    <property type="project" value="UniProtKB-UniRule"/>
</dbReference>
<dbReference type="CDD" id="cd18079">
    <property type="entry name" value="S-AdoMet_synt"/>
    <property type="match status" value="1"/>
</dbReference>
<dbReference type="FunFam" id="3.30.300.10:FF:000001">
    <property type="entry name" value="S-adenosylmethionine synthase"/>
    <property type="match status" value="1"/>
</dbReference>
<dbReference type="FunFam" id="3.30.300.10:FF:000003">
    <property type="entry name" value="S-adenosylmethionine synthase"/>
    <property type="match status" value="1"/>
</dbReference>
<dbReference type="Gene3D" id="3.30.300.10">
    <property type="match status" value="3"/>
</dbReference>
<dbReference type="HAMAP" id="MF_00086">
    <property type="entry name" value="S_AdoMet_synth1"/>
    <property type="match status" value="1"/>
</dbReference>
<dbReference type="InterPro" id="IPR022631">
    <property type="entry name" value="ADOMET_SYNTHASE_CS"/>
</dbReference>
<dbReference type="InterPro" id="IPR022630">
    <property type="entry name" value="S-AdoMet_synt_C"/>
</dbReference>
<dbReference type="InterPro" id="IPR022629">
    <property type="entry name" value="S-AdoMet_synt_central"/>
</dbReference>
<dbReference type="InterPro" id="IPR022628">
    <property type="entry name" value="S-AdoMet_synt_N"/>
</dbReference>
<dbReference type="InterPro" id="IPR002133">
    <property type="entry name" value="S-AdoMet_synthetase"/>
</dbReference>
<dbReference type="InterPro" id="IPR022636">
    <property type="entry name" value="S-AdoMet_synthetase_sfam"/>
</dbReference>
<dbReference type="NCBIfam" id="TIGR01034">
    <property type="entry name" value="metK"/>
    <property type="match status" value="1"/>
</dbReference>
<dbReference type="PANTHER" id="PTHR11964">
    <property type="entry name" value="S-ADENOSYLMETHIONINE SYNTHETASE"/>
    <property type="match status" value="1"/>
</dbReference>
<dbReference type="Pfam" id="PF02773">
    <property type="entry name" value="S-AdoMet_synt_C"/>
    <property type="match status" value="1"/>
</dbReference>
<dbReference type="Pfam" id="PF02772">
    <property type="entry name" value="S-AdoMet_synt_M"/>
    <property type="match status" value="1"/>
</dbReference>
<dbReference type="Pfam" id="PF00438">
    <property type="entry name" value="S-AdoMet_synt_N"/>
    <property type="match status" value="1"/>
</dbReference>
<dbReference type="PIRSF" id="PIRSF000497">
    <property type="entry name" value="MAT"/>
    <property type="match status" value="1"/>
</dbReference>
<dbReference type="SUPFAM" id="SSF55973">
    <property type="entry name" value="S-adenosylmethionine synthetase"/>
    <property type="match status" value="3"/>
</dbReference>
<dbReference type="PROSITE" id="PS00376">
    <property type="entry name" value="ADOMET_SYNTHASE_1"/>
    <property type="match status" value="1"/>
</dbReference>
<dbReference type="PROSITE" id="PS00377">
    <property type="entry name" value="ADOMET_SYNTHASE_2"/>
    <property type="match status" value="1"/>
</dbReference>
<proteinExistence type="inferred from homology"/>
<accession>A8GIX9</accession>
<evidence type="ECO:0000255" key="1">
    <source>
        <dbReference type="HAMAP-Rule" id="MF_00086"/>
    </source>
</evidence>
<sequence>MAKHLFTSESVSEGHPDKIADQISDAVLDAILEQDPKARVACETYVKTGMVLVGGEITTSAWVDIEEITRKTVREIGYVHSDMGFDANSCAVLSAIGKQSPDINQGVDRTDPLEQGAGDQGLMFGYATNETEVLMPAPVTYAHRLVQRQAEVRKNGTLPWLRPDAKSQVTFQYDDGKIVGIDAVVLSTQHSEDISLKDLQEAVMEEIIKPVLPTEWLSAGTKYHINPTGRFVIGGPMGDCGLTGRKIIVDTYGGMARHGGGAFSGKDPSKVDRSAAYAARYVAKNIVAAGLADRCEIQVSYAIGVAEPTSIMVETFGTEKIPTEQLTLLVREFFDLRPYGLIQMMDLLQPIYRETAAYGHFGREHFPWEATDKAALLRDAAGLK</sequence>
<name>METK_SERP5</name>
<gene>
    <name evidence="1" type="primary">metK</name>
    <name type="ordered locus">Spro_3974</name>
</gene>
<keyword id="KW-0067">ATP-binding</keyword>
<keyword id="KW-0963">Cytoplasm</keyword>
<keyword id="KW-0460">Magnesium</keyword>
<keyword id="KW-0479">Metal-binding</keyword>
<keyword id="KW-0547">Nucleotide-binding</keyword>
<keyword id="KW-0554">One-carbon metabolism</keyword>
<keyword id="KW-0630">Potassium</keyword>
<keyword id="KW-0808">Transferase</keyword>
<feature type="chain" id="PRO_1000057564" description="S-adenosylmethionine synthase">
    <location>
        <begin position="1"/>
        <end position="384"/>
    </location>
</feature>
<feature type="region of interest" description="Flexible loop" evidence="1">
    <location>
        <begin position="99"/>
        <end position="109"/>
    </location>
</feature>
<feature type="binding site" description="in other chain" evidence="1">
    <location>
        <position position="15"/>
    </location>
    <ligand>
        <name>ATP</name>
        <dbReference type="ChEBI" id="CHEBI:30616"/>
        <note>ligand shared between two neighboring subunits</note>
    </ligand>
</feature>
<feature type="binding site" evidence="1">
    <location>
        <position position="17"/>
    </location>
    <ligand>
        <name>Mg(2+)</name>
        <dbReference type="ChEBI" id="CHEBI:18420"/>
    </ligand>
</feature>
<feature type="binding site" evidence="1">
    <location>
        <position position="43"/>
    </location>
    <ligand>
        <name>K(+)</name>
        <dbReference type="ChEBI" id="CHEBI:29103"/>
    </ligand>
</feature>
<feature type="binding site" description="in other chain" evidence="1">
    <location>
        <position position="56"/>
    </location>
    <ligand>
        <name>L-methionine</name>
        <dbReference type="ChEBI" id="CHEBI:57844"/>
        <note>ligand shared between two neighboring subunits</note>
    </ligand>
</feature>
<feature type="binding site" description="in other chain" evidence="1">
    <location>
        <position position="99"/>
    </location>
    <ligand>
        <name>L-methionine</name>
        <dbReference type="ChEBI" id="CHEBI:57844"/>
        <note>ligand shared between two neighboring subunits</note>
    </ligand>
</feature>
<feature type="binding site" description="in other chain" evidence="1">
    <location>
        <begin position="164"/>
        <end position="166"/>
    </location>
    <ligand>
        <name>ATP</name>
        <dbReference type="ChEBI" id="CHEBI:30616"/>
        <note>ligand shared between two neighboring subunits</note>
    </ligand>
</feature>
<feature type="binding site" description="in other chain" evidence="1">
    <location>
        <begin position="230"/>
        <end position="231"/>
    </location>
    <ligand>
        <name>ATP</name>
        <dbReference type="ChEBI" id="CHEBI:30616"/>
        <note>ligand shared between two neighboring subunits</note>
    </ligand>
</feature>
<feature type="binding site" evidence="1">
    <location>
        <position position="239"/>
    </location>
    <ligand>
        <name>ATP</name>
        <dbReference type="ChEBI" id="CHEBI:30616"/>
        <note>ligand shared between two neighboring subunits</note>
    </ligand>
</feature>
<feature type="binding site" evidence="1">
    <location>
        <position position="239"/>
    </location>
    <ligand>
        <name>L-methionine</name>
        <dbReference type="ChEBI" id="CHEBI:57844"/>
        <note>ligand shared between two neighboring subunits</note>
    </ligand>
</feature>
<feature type="binding site" description="in other chain" evidence="1">
    <location>
        <begin position="245"/>
        <end position="246"/>
    </location>
    <ligand>
        <name>ATP</name>
        <dbReference type="ChEBI" id="CHEBI:30616"/>
        <note>ligand shared between two neighboring subunits</note>
    </ligand>
</feature>
<feature type="binding site" evidence="1">
    <location>
        <position position="262"/>
    </location>
    <ligand>
        <name>ATP</name>
        <dbReference type="ChEBI" id="CHEBI:30616"/>
        <note>ligand shared between two neighboring subunits</note>
    </ligand>
</feature>
<feature type="binding site" evidence="1">
    <location>
        <position position="266"/>
    </location>
    <ligand>
        <name>ATP</name>
        <dbReference type="ChEBI" id="CHEBI:30616"/>
        <note>ligand shared between two neighboring subunits</note>
    </ligand>
</feature>
<feature type="binding site" description="in other chain" evidence="1">
    <location>
        <position position="270"/>
    </location>
    <ligand>
        <name>L-methionine</name>
        <dbReference type="ChEBI" id="CHEBI:57844"/>
        <note>ligand shared between two neighboring subunits</note>
    </ligand>
</feature>
<organism>
    <name type="scientific">Serratia proteamaculans (strain 568)</name>
    <dbReference type="NCBI Taxonomy" id="399741"/>
    <lineage>
        <taxon>Bacteria</taxon>
        <taxon>Pseudomonadati</taxon>
        <taxon>Pseudomonadota</taxon>
        <taxon>Gammaproteobacteria</taxon>
        <taxon>Enterobacterales</taxon>
        <taxon>Yersiniaceae</taxon>
        <taxon>Serratia</taxon>
    </lineage>
</organism>
<protein>
    <recommendedName>
        <fullName evidence="1">S-adenosylmethionine synthase</fullName>
        <shortName evidence="1">AdoMet synthase</shortName>
        <ecNumber evidence="1">2.5.1.6</ecNumber>
    </recommendedName>
    <alternativeName>
        <fullName evidence="1">MAT</fullName>
    </alternativeName>
    <alternativeName>
        <fullName evidence="1">Methionine adenosyltransferase</fullName>
    </alternativeName>
</protein>